<name>SGP2_ALLVD</name>
<protein>
    <recommendedName>
        <fullName>Sulfur globule protein CV2</fullName>
    </recommendedName>
</protein>
<gene>
    <name type="primary">sgpB</name>
    <name type="synonym">sgp2</name>
    <name type="ordered locus">Alvin_0358</name>
</gene>
<sequence>MKKLATAAAVAALLGASASASAWWGPGWGGPGYGSGMGDWMNDMFGDGYGDFNMSMSGGGRGYGRGNGYGRGYGYGNPYYGYGYPYYGGYGAPYGAYGAPYAFPYGAPYGAPVAPAAPAQSESK</sequence>
<evidence type="ECO:0000269" key="1">
    <source>
    </source>
</evidence>
<evidence type="ECO:0000305" key="2"/>
<feature type="signal peptide" evidence="1">
    <location>
        <begin position="1"/>
        <end position="22"/>
    </location>
</feature>
<feature type="chain" id="PRO_0000022326" description="Sulfur globule protein CV2">
    <location>
        <begin position="23"/>
        <end position="124"/>
    </location>
</feature>
<accession>O52179</accession>
<accession>D3RN35</accession>
<dbReference type="EMBL" id="AF025952">
    <property type="protein sequence ID" value="AAB91547.1"/>
    <property type="molecule type" value="Genomic_DNA"/>
</dbReference>
<dbReference type="EMBL" id="CP001896">
    <property type="protein sequence ID" value="ADC61319.1"/>
    <property type="molecule type" value="Genomic_DNA"/>
</dbReference>
<dbReference type="RefSeq" id="WP_012969595.1">
    <property type="nucleotide sequence ID" value="NC_013851.1"/>
</dbReference>
<dbReference type="STRING" id="572477.Alvin_0358"/>
<dbReference type="KEGG" id="alv:Alvin_0358"/>
<dbReference type="eggNOG" id="ENOG5032P0R">
    <property type="taxonomic scope" value="Bacteria"/>
</dbReference>
<dbReference type="HOGENOM" id="CLU_133323_0_0_6"/>
<dbReference type="Proteomes" id="UP000001441">
    <property type="component" value="Chromosome"/>
</dbReference>
<dbReference type="InterPro" id="IPR035173">
    <property type="entry name" value="SGP"/>
</dbReference>
<dbReference type="Pfam" id="PF17228">
    <property type="entry name" value="SGP"/>
    <property type="match status" value="1"/>
</dbReference>
<organism>
    <name type="scientific">Allochromatium vinosum (strain ATCC 17899 / DSM 180 / NBRC 103801 / NCIMB 10441 / D)</name>
    <name type="common">Chromatium vinosum</name>
    <dbReference type="NCBI Taxonomy" id="572477"/>
    <lineage>
        <taxon>Bacteria</taxon>
        <taxon>Pseudomonadati</taxon>
        <taxon>Pseudomonadota</taxon>
        <taxon>Gammaproteobacteria</taxon>
        <taxon>Chromatiales</taxon>
        <taxon>Chromatiaceae</taxon>
        <taxon>Allochromatium</taxon>
    </lineage>
</organism>
<keyword id="KW-0903">Direct protein sequencing</keyword>
<keyword id="KW-1185">Reference proteome</keyword>
<keyword id="KW-0732">Signal</keyword>
<reference key="1">
    <citation type="journal article" date="1998" name="Arch. Microbiol.">
        <title>Molecular genetic evidence for extracytoplasmic localization of sulfur globules in Chromatium vinosum.</title>
        <authorList>
            <person name="Pattaragulwanit K."/>
            <person name="Brune D.C."/>
            <person name="Trueper H.G."/>
            <person name="Dahl C."/>
        </authorList>
    </citation>
    <scope>NUCLEOTIDE SEQUENCE [GENOMIC DNA]</scope>
</reference>
<reference key="2">
    <citation type="journal article" date="2011" name="Stand. Genomic Sci.">
        <title>Complete genome sequence of Allochromatium vinosum DSM 180(T).</title>
        <authorList>
            <person name="Weissgerber T."/>
            <person name="Zigann R."/>
            <person name="Bruce D."/>
            <person name="Chang Y.J."/>
            <person name="Detter J.C."/>
            <person name="Han C."/>
            <person name="Hauser L."/>
            <person name="Jeffries C.D."/>
            <person name="Land M."/>
            <person name="Munk A.C."/>
            <person name="Tapia R."/>
            <person name="Dahl C."/>
        </authorList>
    </citation>
    <scope>NUCLEOTIDE SEQUENCE [LARGE SCALE GENOMIC DNA]</scope>
    <source>
        <strain>ATCC 17899 / DSM 180 / NBRC 103801 / NCIMB 10441 / D</strain>
    </source>
</reference>
<reference key="3">
    <citation type="journal article" date="1995" name="Arch. Microbiol.">
        <title>Isolation and characterization of sulfur globule proteins from Chromatium vinosum and Thiocapsa roseopersicina.</title>
        <authorList>
            <person name="Brune D.C."/>
        </authorList>
    </citation>
    <scope>PROTEIN SEQUENCE OF 23-72</scope>
    <scope>CHARACTERIZATION</scope>
    <scope>MASS SPECTROMETRY</scope>
</reference>
<comment type="function">
    <text>Structural protein of the sulfur globules, which are intracellular globules that serve for sulfur storage in purple sulfur bacteria.</text>
</comment>
<comment type="subunit">
    <text>The protein envelope of the sulfur globules is composed of the three different proteins CV1, CV2 and CV3.</text>
</comment>
<comment type="mass spectrometry"/>
<comment type="similarity">
    <text evidence="2">To C.vinosum CV1 and T.roseopersicina TR0.</text>
</comment>
<proteinExistence type="evidence at protein level"/>